<accession>A6MMB2</accession>
<keyword id="KW-0150">Chloroplast</keyword>
<keyword id="KW-0240">DNA-directed RNA polymerase</keyword>
<keyword id="KW-0479">Metal-binding</keyword>
<keyword id="KW-0548">Nucleotidyltransferase</keyword>
<keyword id="KW-0934">Plastid</keyword>
<keyword id="KW-0804">Transcription</keyword>
<keyword id="KW-0808">Transferase</keyword>
<keyword id="KW-0862">Zinc</keyword>
<feature type="chain" id="PRO_0000353552" description="DNA-directed RNA polymerase subunit beta''">
    <location>
        <begin position="1"/>
        <end position="1389"/>
    </location>
</feature>
<feature type="binding site" evidence="1">
    <location>
        <position position="220"/>
    </location>
    <ligand>
        <name>Zn(2+)</name>
        <dbReference type="ChEBI" id="CHEBI:29105"/>
    </ligand>
</feature>
<feature type="binding site" evidence="1">
    <location>
        <position position="290"/>
    </location>
    <ligand>
        <name>Zn(2+)</name>
        <dbReference type="ChEBI" id="CHEBI:29105"/>
    </ligand>
</feature>
<feature type="binding site" evidence="1">
    <location>
        <position position="297"/>
    </location>
    <ligand>
        <name>Zn(2+)</name>
        <dbReference type="ChEBI" id="CHEBI:29105"/>
    </ligand>
</feature>
<feature type="binding site" evidence="1">
    <location>
        <position position="300"/>
    </location>
    <ligand>
        <name>Zn(2+)</name>
        <dbReference type="ChEBI" id="CHEBI:29105"/>
    </ligand>
</feature>
<geneLocation type="chloroplast"/>
<name>RPOC2_CHLSC</name>
<gene>
    <name evidence="1" type="primary">rpoC2</name>
</gene>
<dbReference type="EC" id="2.7.7.6" evidence="1"/>
<dbReference type="EMBL" id="EF380352">
    <property type="protein sequence ID" value="ABQ43250.1"/>
    <property type="molecule type" value="Genomic_DNA"/>
</dbReference>
<dbReference type="RefSeq" id="YP_001294088.1">
    <property type="nucleotide sequence ID" value="NC_009598.1"/>
</dbReference>
<dbReference type="SMR" id="A6MMB2"/>
<dbReference type="GeneID" id="5236457"/>
<dbReference type="GO" id="GO:0009507">
    <property type="term" value="C:chloroplast"/>
    <property type="evidence" value="ECO:0007669"/>
    <property type="project" value="UniProtKB-SubCell"/>
</dbReference>
<dbReference type="GO" id="GO:0000428">
    <property type="term" value="C:DNA-directed RNA polymerase complex"/>
    <property type="evidence" value="ECO:0007669"/>
    <property type="project" value="UniProtKB-KW"/>
</dbReference>
<dbReference type="GO" id="GO:0005739">
    <property type="term" value="C:mitochondrion"/>
    <property type="evidence" value="ECO:0007669"/>
    <property type="project" value="GOC"/>
</dbReference>
<dbReference type="GO" id="GO:0003677">
    <property type="term" value="F:DNA binding"/>
    <property type="evidence" value="ECO:0007669"/>
    <property type="project" value="UniProtKB-UniRule"/>
</dbReference>
<dbReference type="GO" id="GO:0003899">
    <property type="term" value="F:DNA-directed RNA polymerase activity"/>
    <property type="evidence" value="ECO:0007669"/>
    <property type="project" value="UniProtKB-UniRule"/>
</dbReference>
<dbReference type="GO" id="GO:0008270">
    <property type="term" value="F:zinc ion binding"/>
    <property type="evidence" value="ECO:0007669"/>
    <property type="project" value="UniProtKB-UniRule"/>
</dbReference>
<dbReference type="GO" id="GO:0006351">
    <property type="term" value="P:DNA-templated transcription"/>
    <property type="evidence" value="ECO:0007669"/>
    <property type="project" value="UniProtKB-UniRule"/>
</dbReference>
<dbReference type="CDD" id="cd02655">
    <property type="entry name" value="RNAP_beta'_C"/>
    <property type="match status" value="1"/>
</dbReference>
<dbReference type="FunFam" id="1.10.132.30:FF:000002">
    <property type="entry name" value="DNA-directed RNA polymerase subunit beta"/>
    <property type="match status" value="1"/>
</dbReference>
<dbReference type="FunFam" id="1.10.1790.20:FF:000002">
    <property type="entry name" value="DNA-directed RNA polymerase subunit beta"/>
    <property type="match status" value="1"/>
</dbReference>
<dbReference type="Gene3D" id="1.10.132.30">
    <property type="match status" value="1"/>
</dbReference>
<dbReference type="Gene3D" id="1.10.150.390">
    <property type="match status" value="1"/>
</dbReference>
<dbReference type="Gene3D" id="1.10.1790.20">
    <property type="match status" value="1"/>
</dbReference>
<dbReference type="Gene3D" id="1.10.274.100">
    <property type="entry name" value="RNA polymerase Rpb1, domain 3"/>
    <property type="match status" value="1"/>
</dbReference>
<dbReference type="HAMAP" id="MF_01324">
    <property type="entry name" value="RNApol_bact_RpoC2"/>
    <property type="match status" value="1"/>
</dbReference>
<dbReference type="InterPro" id="IPR012756">
    <property type="entry name" value="DNA-dir_RpoC2_beta_pp"/>
</dbReference>
<dbReference type="InterPro" id="IPR050254">
    <property type="entry name" value="RNA_pol_beta''_euk"/>
</dbReference>
<dbReference type="InterPro" id="IPR042102">
    <property type="entry name" value="RNA_pol_Rpb1_3_sf"/>
</dbReference>
<dbReference type="InterPro" id="IPR007083">
    <property type="entry name" value="RNA_pol_Rpb1_4"/>
</dbReference>
<dbReference type="InterPro" id="IPR007081">
    <property type="entry name" value="RNA_pol_Rpb1_5"/>
</dbReference>
<dbReference type="InterPro" id="IPR038120">
    <property type="entry name" value="Rpb1_funnel_sf"/>
</dbReference>
<dbReference type="NCBIfam" id="TIGR02388">
    <property type="entry name" value="rpoC2_cyan"/>
    <property type="match status" value="1"/>
</dbReference>
<dbReference type="PANTHER" id="PTHR34995">
    <property type="entry name" value="DNA-DIRECTED RNA POLYMERASE SUBUNIT BETA"/>
    <property type="match status" value="1"/>
</dbReference>
<dbReference type="PANTHER" id="PTHR34995:SF1">
    <property type="entry name" value="DNA-DIRECTED RNA POLYMERASE SUBUNIT BETA"/>
    <property type="match status" value="1"/>
</dbReference>
<dbReference type="Pfam" id="PF05000">
    <property type="entry name" value="RNA_pol_Rpb1_4"/>
    <property type="match status" value="1"/>
</dbReference>
<dbReference type="Pfam" id="PF04998">
    <property type="entry name" value="RNA_pol_Rpb1_5"/>
    <property type="match status" value="2"/>
</dbReference>
<dbReference type="SUPFAM" id="SSF64484">
    <property type="entry name" value="beta and beta-prime subunits of DNA dependent RNA-polymerase"/>
    <property type="match status" value="1"/>
</dbReference>
<reference key="1">
    <citation type="journal article" date="2007" name="Mol. Phylogenet. Evol.">
        <title>Phylogenetic and evolutionary implications of complete chloroplast genome sequences of four early-diverging angiosperms: Buxus (Buxaceae), Chloranthus (Chloranthaceae), Dioscorea (Dioscoreaceae), and Illicium (Schisandraceae).</title>
        <authorList>
            <person name="Hansen D.R."/>
            <person name="Dastidar S.G."/>
            <person name="Cai Z."/>
            <person name="Penaflor C."/>
            <person name="Kuehl J.V."/>
            <person name="Boore J.L."/>
            <person name="Jansen R.K."/>
        </authorList>
    </citation>
    <scope>NUCLEOTIDE SEQUENCE [LARGE SCALE GENOMIC DNA]</scope>
</reference>
<comment type="function">
    <text evidence="1">DNA-dependent RNA polymerase catalyzes the transcription of DNA into RNA using the four ribonucleoside triphosphates as substrates.</text>
</comment>
<comment type="catalytic activity">
    <reaction evidence="1">
        <text>RNA(n) + a ribonucleoside 5'-triphosphate = RNA(n+1) + diphosphate</text>
        <dbReference type="Rhea" id="RHEA:21248"/>
        <dbReference type="Rhea" id="RHEA-COMP:14527"/>
        <dbReference type="Rhea" id="RHEA-COMP:17342"/>
        <dbReference type="ChEBI" id="CHEBI:33019"/>
        <dbReference type="ChEBI" id="CHEBI:61557"/>
        <dbReference type="ChEBI" id="CHEBI:140395"/>
        <dbReference type="EC" id="2.7.7.6"/>
    </reaction>
</comment>
<comment type="cofactor">
    <cofactor evidence="1">
        <name>Zn(2+)</name>
        <dbReference type="ChEBI" id="CHEBI:29105"/>
    </cofactor>
    <text evidence="1">Binds 1 Zn(2+) ion per subunit.</text>
</comment>
<comment type="subunit">
    <text evidence="1">In plastids the minimal PEP RNA polymerase catalytic core is composed of four subunits: alpha, beta, beta', and beta''. When a (nuclear-encoded) sigma factor is associated with the core the holoenzyme is formed, which can initiate transcription.</text>
</comment>
<comment type="subcellular location">
    <subcellularLocation>
        <location evidence="1">Plastid</location>
        <location evidence="1">Chloroplast</location>
    </subcellularLocation>
</comment>
<comment type="similarity">
    <text evidence="1">Belongs to the RNA polymerase beta' chain family. RpoC2 subfamily.</text>
</comment>
<proteinExistence type="inferred from homology"/>
<protein>
    <recommendedName>
        <fullName evidence="1">DNA-directed RNA polymerase subunit beta''</fullName>
        <ecNumber evidence="1">2.7.7.6</ecNumber>
    </recommendedName>
    <alternativeName>
        <fullName evidence="1">PEP</fullName>
    </alternativeName>
    <alternativeName>
        <fullName evidence="1">Plastid-encoded RNA polymerase subunit beta''</fullName>
        <shortName evidence="1">RNA polymerase subunit beta''</shortName>
    </alternativeName>
</protein>
<sequence length="1389" mass="157297">MAERADLVFHNKVIDGTAMKRLISRLIDHFGMAYTSHILDQVKTLGFQQATATSISLGIDDLLTIPSKGWLVQDAEQQSLILEKYHHYGNVHAVEKLRQSIEIWYATSEYLRQEMNPNFRMTDPSNPVHIMSFSGARGNASQVHQLVGMRGLMSDPQGQMIDLPIQSNLREGLSLTEYIISCYGARKGVVDTAVRTSDAGYLTRRLVEVVQHIVVRRTDCGTIRGIFVSPQNGMAKRIFIQTLIGRVLADDIYMGPRCIAARNQYIGIGLVNRFITFRAQPISIRTPFTCRSTSWICRLCYGRSPTHGDLVELGEAVGIIAGQSIGEPGTQLTLRTFHTGGVFTGGTAEHVRAPSNGKIKFNEDLVHPTRTRHGHPAFLCYIDLYVTIENQDIIHNVNIPPKSFLLVQNDQYVESEQVIAEIRAGASTLNFKERVRKHIYSDSEGEMHWSTDVYHASEYTYGNVHLLPKTSHLWILSGSPYRSSIVPFSLHKDQDQMNVHSLSVERGSISDLSVTNDRVRHKLFSSDLSGKKRGGILDYSGPDRIISNGHGHWNFIYPAILHENSDLLAKRRRNRFIIPFQYDQEREKELMPRSGISIEIPINGIFRRKSILAYFDDPRYRKSSSGITKYGTIEVDSIVKKEDLIEYRGAKEFRPKYQMKVDRFFFIPEEVHILTGSSSIMVRNNSIIGVDTRIALNTRSRVGGLVRVEKKKKRIELKIFSGDIHFPGETDKISRHSGILIPPGTGKKNPKESKKWKNWIYVQQITPTKKKYFVSVRSVVTYEIADGINLATLFPQDLLQERDNVQLRVVNYILYGNGKPIRGISHTSIQLVRTCLVLNWDQDRNGSIEEAHASFVEVRANALIRDFIRIHLVKSPISYTVKRNDTASSGLIPDNASDRPNINPFDFKARVQSLTQHQGTIRTLLNRNKECQSLIILSSSNCSRLGPFNGSKYHNVTKESIQTKDKEDPSISIRNSLGPLGIVPKIANFYYLMTHNQILLNKYLLLDNLKQTFQVLQYYQVIKYSLMDENGQIYNPDPYSNTILNPFDLNWRFLHHDYCEETSTIISLGQFICENGCISKYGPHIESGQVLIVHVDSLVIRSAKPHLATPGATVHGHYGEILYEGDTLVTFIYEKSRSGDITQGLPKVEQVLEVRSIDSISINLEKRVEGWNERITRIIGIPWGFLIGAELTIAQSRISLVNKIQKVYRSQGVQIHNRHIEIIVRQITSKVLVSEDGMSNVFSPGELIGLLRAERTGRALEEAICYRAILLGITRTSLNTQSFISEASFQETARVLAKAALRGRIDWLKGLKENVVLGGMIPVGTGFKGLVHRSRQHNNSPLEIKKKNLFEGEMRDILFHHRELFGSCIPNHFHDTSEQSFTFTGFHDS</sequence>
<organism>
    <name type="scientific">Chloranthus spicatus</name>
    <name type="common">Chulantree</name>
    <name type="synonym">Nigrina spicata</name>
    <dbReference type="NCBI Taxonomy" id="13006"/>
    <lineage>
        <taxon>Eukaryota</taxon>
        <taxon>Viridiplantae</taxon>
        <taxon>Streptophyta</taxon>
        <taxon>Embryophyta</taxon>
        <taxon>Tracheophyta</taxon>
        <taxon>Spermatophyta</taxon>
        <taxon>Magnoliopsida</taxon>
        <taxon>Chloranthales</taxon>
        <taxon>Chloranthaceae</taxon>
        <taxon>Chloranthus</taxon>
    </lineage>
</organism>
<evidence type="ECO:0000255" key="1">
    <source>
        <dbReference type="HAMAP-Rule" id="MF_01324"/>
    </source>
</evidence>